<dbReference type="EMBL" id="U00096">
    <property type="protein sequence ID" value="AAC75167.1"/>
    <property type="molecule type" value="Genomic_DNA"/>
</dbReference>
<dbReference type="EMBL" id="AP009048">
    <property type="protein sequence ID" value="BAA15973.1"/>
    <property type="molecule type" value="Genomic_DNA"/>
</dbReference>
<dbReference type="PIR" id="A64978">
    <property type="entry name" value="A64978"/>
</dbReference>
<dbReference type="RefSeq" id="NP_416609.1">
    <property type="nucleotide sequence ID" value="NC_000913.3"/>
</dbReference>
<dbReference type="RefSeq" id="WP_000134636.1">
    <property type="nucleotide sequence ID" value="NZ_SSZK01000011.1"/>
</dbReference>
<dbReference type="BioGRID" id="4260955">
    <property type="interactions" value="10"/>
</dbReference>
<dbReference type="FunCoup" id="P76425">
    <property type="interactions" value="17"/>
</dbReference>
<dbReference type="STRING" id="511145.b2106"/>
<dbReference type="TCDB" id="2.A.113.1.1">
    <property type="family name" value="the nickel/cobalt transporter (nico) family"/>
</dbReference>
<dbReference type="PaxDb" id="511145-b2106"/>
<dbReference type="EnsemblBacteria" id="AAC75167">
    <property type="protein sequence ID" value="AAC75167"/>
    <property type="gene ID" value="b2106"/>
</dbReference>
<dbReference type="GeneID" id="949078"/>
<dbReference type="KEGG" id="ecj:JW2093"/>
<dbReference type="KEGG" id="eco:b2106"/>
<dbReference type="KEGG" id="ecoc:C3026_11815"/>
<dbReference type="PATRIC" id="fig|1411691.4.peg.141"/>
<dbReference type="EchoBASE" id="EB3824"/>
<dbReference type="eggNOG" id="COG2215">
    <property type="taxonomic scope" value="Bacteria"/>
</dbReference>
<dbReference type="HOGENOM" id="CLU_058605_2_0_6"/>
<dbReference type="InParanoid" id="P76425"/>
<dbReference type="OMA" id="WMIWRTW"/>
<dbReference type="OrthoDB" id="271709at2"/>
<dbReference type="PhylomeDB" id="P76425"/>
<dbReference type="BioCyc" id="EcoCyc:G7138-MONOMER"/>
<dbReference type="BioCyc" id="MetaCyc:G7138-MONOMER"/>
<dbReference type="PRO" id="PR:P76425"/>
<dbReference type="Proteomes" id="UP000000625">
    <property type="component" value="Chromosome"/>
</dbReference>
<dbReference type="GO" id="GO:0005886">
    <property type="term" value="C:plasma membrane"/>
    <property type="evidence" value="ECO:0000314"/>
    <property type="project" value="EcoCyc"/>
</dbReference>
<dbReference type="GO" id="GO:0015099">
    <property type="term" value="F:nickel cation transmembrane transporter activity"/>
    <property type="evidence" value="ECO:0000315"/>
    <property type="project" value="EcoCyc"/>
</dbReference>
<dbReference type="GO" id="GO:0006824">
    <property type="term" value="P:cobalt ion transport"/>
    <property type="evidence" value="ECO:0007669"/>
    <property type="project" value="UniProtKB-KW"/>
</dbReference>
<dbReference type="GO" id="GO:0035785">
    <property type="term" value="P:intracellular nickel ion homeostasis"/>
    <property type="evidence" value="ECO:0000314"/>
    <property type="project" value="EcoCyc"/>
</dbReference>
<dbReference type="GO" id="GO:0035444">
    <property type="term" value="P:nickel cation transmembrane transport"/>
    <property type="evidence" value="ECO:0000315"/>
    <property type="project" value="EcoCyc"/>
</dbReference>
<dbReference type="GO" id="GO:0032025">
    <property type="term" value="P:response to cobalt ion"/>
    <property type="evidence" value="ECO:0000270"/>
    <property type="project" value="EcoCyc"/>
</dbReference>
<dbReference type="GO" id="GO:0010045">
    <property type="term" value="P:response to nickel cation"/>
    <property type="evidence" value="ECO:0000270"/>
    <property type="project" value="EcoCyc"/>
</dbReference>
<dbReference type="Gene3D" id="3.40.50.1980">
    <property type="entry name" value="Nitrogenase molybdenum iron protein domain"/>
    <property type="match status" value="1"/>
</dbReference>
<dbReference type="InterPro" id="IPR011541">
    <property type="entry name" value="Ni/Co_transpt_high_affinity"/>
</dbReference>
<dbReference type="InterPro" id="IPR051224">
    <property type="entry name" value="NiCoT_RcnA"/>
</dbReference>
<dbReference type="NCBIfam" id="NF007454">
    <property type="entry name" value="PRK10019.1"/>
    <property type="match status" value="1"/>
</dbReference>
<dbReference type="PANTHER" id="PTHR40659">
    <property type="entry name" value="NICKEL/COBALT EFFLUX SYSTEM RCNA"/>
    <property type="match status" value="1"/>
</dbReference>
<dbReference type="PANTHER" id="PTHR40659:SF1">
    <property type="entry name" value="NICKEL_COBALT EFFLUX SYSTEM RCNA"/>
    <property type="match status" value="1"/>
</dbReference>
<dbReference type="Pfam" id="PF03824">
    <property type="entry name" value="NicO"/>
    <property type="match status" value="1"/>
</dbReference>
<keyword id="KW-0997">Cell inner membrane</keyword>
<keyword id="KW-1003">Cell membrane</keyword>
<keyword id="KW-0170">Cobalt</keyword>
<keyword id="KW-0171">Cobalt transport</keyword>
<keyword id="KW-0406">Ion transport</keyword>
<keyword id="KW-0472">Membrane</keyword>
<keyword id="KW-0533">Nickel</keyword>
<keyword id="KW-0921">Nickel transport</keyword>
<keyword id="KW-1185">Reference proteome</keyword>
<keyword id="KW-0812">Transmembrane</keyword>
<keyword id="KW-1133">Transmembrane helix</keyword>
<keyword id="KW-0813">Transport</keyword>
<proteinExistence type="evidence at protein level"/>
<name>RCNA_ECOLI</name>
<organism>
    <name type="scientific">Escherichia coli (strain K12)</name>
    <dbReference type="NCBI Taxonomy" id="83333"/>
    <lineage>
        <taxon>Bacteria</taxon>
        <taxon>Pseudomonadati</taxon>
        <taxon>Pseudomonadota</taxon>
        <taxon>Gammaproteobacteria</taxon>
        <taxon>Enterobacterales</taxon>
        <taxon>Enterobacteriaceae</taxon>
        <taxon>Escherichia</taxon>
    </lineage>
</organism>
<gene>
    <name type="primary">rcnA</name>
    <name type="synonym">yohM</name>
    <name type="ordered locus">b2106</name>
    <name type="ordered locus">JW2093</name>
</gene>
<evidence type="ECO:0000255" key="1"/>
<evidence type="ECO:0000256" key="2">
    <source>
        <dbReference type="SAM" id="MobiDB-lite"/>
    </source>
</evidence>
<evidence type="ECO:0000269" key="3">
    <source>
    </source>
</evidence>
<evidence type="ECO:0000305" key="4"/>
<reference key="1">
    <citation type="journal article" date="1996" name="DNA Res.">
        <title>A 460-kb DNA sequence of the Escherichia coli K-12 genome corresponding to the 40.1-50.0 min region on the linkage map.</title>
        <authorList>
            <person name="Itoh T."/>
            <person name="Aiba H."/>
            <person name="Baba T."/>
            <person name="Fujita K."/>
            <person name="Hayashi K."/>
            <person name="Inada T."/>
            <person name="Isono K."/>
            <person name="Kasai H."/>
            <person name="Kimura S."/>
            <person name="Kitakawa M."/>
            <person name="Kitagawa M."/>
            <person name="Makino K."/>
            <person name="Miki T."/>
            <person name="Mizobuchi K."/>
            <person name="Mori H."/>
            <person name="Mori T."/>
            <person name="Motomura K."/>
            <person name="Nakade S."/>
            <person name="Nakamura Y."/>
            <person name="Nashimoto H."/>
            <person name="Nishio Y."/>
            <person name="Oshima T."/>
            <person name="Saito N."/>
            <person name="Sampei G."/>
            <person name="Seki Y."/>
            <person name="Sivasundaram S."/>
            <person name="Tagami H."/>
            <person name="Takeda J."/>
            <person name="Takemoto K."/>
            <person name="Wada C."/>
            <person name="Yamamoto Y."/>
            <person name="Horiuchi T."/>
        </authorList>
    </citation>
    <scope>NUCLEOTIDE SEQUENCE [LARGE SCALE GENOMIC DNA]</scope>
    <source>
        <strain>K12 / W3110 / ATCC 27325 / DSM 5911</strain>
    </source>
</reference>
<reference key="2">
    <citation type="journal article" date="1997" name="Science">
        <title>The complete genome sequence of Escherichia coli K-12.</title>
        <authorList>
            <person name="Blattner F.R."/>
            <person name="Plunkett G. III"/>
            <person name="Bloch C.A."/>
            <person name="Perna N.T."/>
            <person name="Burland V."/>
            <person name="Riley M."/>
            <person name="Collado-Vides J."/>
            <person name="Glasner J.D."/>
            <person name="Rode C.K."/>
            <person name="Mayhew G.F."/>
            <person name="Gregor J."/>
            <person name="Davis N.W."/>
            <person name="Kirkpatrick H.A."/>
            <person name="Goeden M.A."/>
            <person name="Rose D.J."/>
            <person name="Mau B."/>
            <person name="Shao Y."/>
        </authorList>
    </citation>
    <scope>NUCLEOTIDE SEQUENCE [LARGE SCALE GENOMIC DNA]</scope>
    <source>
        <strain>K12 / MG1655 / ATCC 47076</strain>
    </source>
</reference>
<reference key="3">
    <citation type="journal article" date="2006" name="Mol. Syst. Biol.">
        <title>Highly accurate genome sequences of Escherichia coli K-12 strains MG1655 and W3110.</title>
        <authorList>
            <person name="Hayashi K."/>
            <person name="Morooka N."/>
            <person name="Yamamoto Y."/>
            <person name="Fujita K."/>
            <person name="Isono K."/>
            <person name="Choi S."/>
            <person name="Ohtsubo E."/>
            <person name="Baba T."/>
            <person name="Wanner B.L."/>
            <person name="Mori H."/>
            <person name="Horiuchi T."/>
        </authorList>
    </citation>
    <scope>NUCLEOTIDE SEQUENCE [LARGE SCALE GENOMIC DNA]</scope>
    <source>
        <strain>K12 / W3110 / ATCC 27325 / DSM 5911</strain>
    </source>
</reference>
<reference key="4">
    <citation type="journal article" date="2005" name="J. Bacteriol.">
        <title>Identification of rcnA (yohM), a nickel and cobalt resistance gene in Escherichia coli.</title>
        <authorList>
            <person name="Rodrigue A."/>
            <person name="Effantin G."/>
            <person name="Mandrand-Berthelot M.A."/>
        </authorList>
    </citation>
    <scope>FUNCTION</scope>
    <scope>SUBCELLULAR LOCATION</scope>
    <scope>INDUCTION</scope>
</reference>
<reference key="5">
    <citation type="journal article" date="2005" name="Science">
        <title>Global topology analysis of the Escherichia coli inner membrane proteome.</title>
        <authorList>
            <person name="Daley D.O."/>
            <person name="Rapp M."/>
            <person name="Granseth E."/>
            <person name="Melen K."/>
            <person name="Drew D."/>
            <person name="von Heijne G."/>
        </authorList>
    </citation>
    <scope>TOPOLOGY [LARGE SCALE ANALYSIS]</scope>
    <source>
        <strain>K12 / MG1655 / ATCC 47076</strain>
    </source>
</reference>
<reference key="6">
    <citation type="journal article" date="2006" name="Mol. Microbiol.">
        <title>Nickel homeostasis in Escherichia coli - the rcnR-rcnA efflux pathway and its linkage to NikR function.</title>
        <authorList>
            <person name="Iwig J.S."/>
            <person name="Rowe J.L."/>
            <person name="Chivers P.T."/>
        </authorList>
    </citation>
    <scope>REGULATION BY RCNR</scope>
    <source>
        <strain>K12 / MG1655 / ATCC 47076</strain>
    </source>
</reference>
<reference key="7">
    <citation type="journal article" date="2007" name="BioMetals">
        <title>The RcnRA (YohLM) system of Escherichia coli: a connection between nickel, cobalt and iron homeostasis.</title>
        <authorList>
            <person name="Koch D."/>
            <person name="Nies D.H."/>
            <person name="Grass G."/>
        </authorList>
    </citation>
    <scope>REGULATION BY RCNR AND FUR</scope>
    <source>
        <strain>K12 / W3110 / ATCC 27325 / DSM 5911</strain>
    </source>
</reference>
<accession>P76425</accession>
<accession>O08015</accession>
<feature type="chain" id="PRO_0000194009" description="Nickel/cobalt efflux system RcnA">
    <location>
        <begin position="1"/>
        <end position="274"/>
    </location>
</feature>
<feature type="topological domain" description="Periplasmic" evidence="1">
    <location>
        <begin position="1"/>
        <end position="12"/>
    </location>
</feature>
<feature type="transmembrane region" description="Helical" evidence="1">
    <location>
        <begin position="13"/>
        <end position="33"/>
    </location>
</feature>
<feature type="topological domain" description="Cytoplasmic" evidence="1">
    <location>
        <begin position="34"/>
        <end position="56"/>
    </location>
</feature>
<feature type="transmembrane region" description="Helical" evidence="1">
    <location>
        <begin position="57"/>
        <end position="77"/>
    </location>
</feature>
<feature type="topological domain" description="Periplasmic" evidence="1">
    <location>
        <begin position="78"/>
        <end position="86"/>
    </location>
</feature>
<feature type="transmembrane region" description="Helical" evidence="1">
    <location>
        <begin position="87"/>
        <end position="107"/>
    </location>
</feature>
<feature type="topological domain" description="Cytoplasmic" evidence="1">
    <location>
        <begin position="108"/>
        <end position="175"/>
    </location>
</feature>
<feature type="transmembrane region" description="Helical" evidence="1">
    <location>
        <begin position="176"/>
        <end position="196"/>
    </location>
</feature>
<feature type="topological domain" description="Periplasmic" evidence="1">
    <location>
        <begin position="197"/>
        <end position="209"/>
    </location>
</feature>
<feature type="transmembrane region" description="Helical" evidence="1">
    <location>
        <begin position="210"/>
        <end position="230"/>
    </location>
</feature>
<feature type="topological domain" description="Cytoplasmic" evidence="1">
    <location>
        <begin position="231"/>
        <end position="251"/>
    </location>
</feature>
<feature type="transmembrane region" description="Helical" evidence="1">
    <location>
        <begin position="252"/>
        <end position="272"/>
    </location>
</feature>
<feature type="topological domain" description="Periplasmic" evidence="1">
    <location>
        <begin position="273"/>
        <end position="274"/>
    </location>
</feature>
<feature type="region of interest" description="Disordered" evidence="2">
    <location>
        <begin position="127"/>
        <end position="153"/>
    </location>
</feature>
<feature type="compositionally biased region" description="Basic residues" evidence="2">
    <location>
        <begin position="129"/>
        <end position="144"/>
    </location>
</feature>
<protein>
    <recommendedName>
        <fullName>Nickel/cobalt efflux system RcnA</fullName>
    </recommendedName>
</protein>
<comment type="function">
    <text evidence="3">Efflux system for nickel and cobalt.</text>
</comment>
<comment type="subcellular location">
    <subcellularLocation>
        <location evidence="3">Cell inner membrane</location>
        <topology evidence="3">Multi-pass membrane protein</topology>
    </subcellularLocation>
</comment>
<comment type="induction">
    <text evidence="3">By nickel and cobalt. Transcriptionally repressed by RcnR. Probably also regulated by Fur. Cadmium, copper and zinc have no effect on the transcription.</text>
</comment>
<comment type="similarity">
    <text evidence="4">Belongs to the NiCoT transporter (TC 2.A.52) family. RcnA subfamily.</text>
</comment>
<sequence length="274" mass="30419">MTEFTTLLQQGNAWFFIPSAILLGALHGLEPGHSKTMMAAFIIAIKGTIKQAVMLGLAATISHTAVVWLIAFGGMVISKRFTAQSAEPWLQLISAVIIISTAFWMFWRTWRGERNWLENMHGHDYEHHHHDHEHHHDHGHHHHHEHGEYQDAHARAHANDIKRRFDGREVTNWQILLFGLTGGLIPCPAAITVLLICIQLKALTLGATLVVSFSIGLALTLVTVGVGAAISVQQVAKRWSGFNTLAKRAPYFSSLLIGLVGVYMGVHGFMGIMR</sequence>